<proteinExistence type="predicted"/>
<keyword id="KW-0238">DNA-binding</keyword>
<keyword id="KW-1185">Reference proteome</keyword>
<keyword id="KW-0804">Transcription</keyword>
<keyword id="KW-0805">Transcription regulation</keyword>
<feature type="chain" id="PRO_0000383637" description="Uncharacterized HTH-type transcriptional regulator YgzD">
    <location>
        <begin position="1"/>
        <end position="66"/>
    </location>
</feature>
<feature type="domain" description="HTH cro/C1-type" evidence="1">
    <location>
        <begin position="5"/>
        <end position="59"/>
    </location>
</feature>
<feature type="DNA-binding region" description="H-T-H motif" evidence="1">
    <location>
        <begin position="16"/>
        <end position="35"/>
    </location>
</feature>
<dbReference type="EMBL" id="AL009126">
    <property type="protein sequence ID" value="CAX52584.1"/>
    <property type="molecule type" value="Genomic_DNA"/>
</dbReference>
<dbReference type="RefSeq" id="WP_009966860.1">
    <property type="nucleotide sequence ID" value="NZ_OZ025638.1"/>
</dbReference>
<dbReference type="RefSeq" id="YP_003097697.1">
    <property type="nucleotide sequence ID" value="NC_000964.3"/>
</dbReference>
<dbReference type="SMR" id="C0H3X9"/>
<dbReference type="FunCoup" id="C0H3X9">
    <property type="interactions" value="3"/>
</dbReference>
<dbReference type="PaxDb" id="224308-BSU08899"/>
<dbReference type="EnsemblBacteria" id="CAX52584">
    <property type="protein sequence ID" value="CAX52584"/>
    <property type="gene ID" value="BSU_08899"/>
</dbReference>
<dbReference type="GeneID" id="8303098"/>
<dbReference type="KEGG" id="bsu:BSU08899"/>
<dbReference type="PATRIC" id="fig|224308.179.peg.960"/>
<dbReference type="eggNOG" id="COG1476">
    <property type="taxonomic scope" value="Bacteria"/>
</dbReference>
<dbReference type="InParanoid" id="C0H3X9"/>
<dbReference type="OrthoDB" id="9808239at2"/>
<dbReference type="PhylomeDB" id="C0H3X9"/>
<dbReference type="BioCyc" id="BSUB:BSU08899-MONOMER"/>
<dbReference type="Proteomes" id="UP000001570">
    <property type="component" value="Chromosome"/>
</dbReference>
<dbReference type="GO" id="GO:0003677">
    <property type="term" value="F:DNA binding"/>
    <property type="evidence" value="ECO:0007669"/>
    <property type="project" value="UniProtKB-KW"/>
</dbReference>
<dbReference type="CDD" id="cd00093">
    <property type="entry name" value="HTH_XRE"/>
    <property type="match status" value="1"/>
</dbReference>
<dbReference type="Gene3D" id="1.10.260.40">
    <property type="entry name" value="lambda repressor-like DNA-binding domains"/>
    <property type="match status" value="1"/>
</dbReference>
<dbReference type="InterPro" id="IPR001387">
    <property type="entry name" value="Cro/C1-type_HTH"/>
</dbReference>
<dbReference type="InterPro" id="IPR010982">
    <property type="entry name" value="Lambda_DNA-bd_dom_sf"/>
</dbReference>
<dbReference type="PANTHER" id="PTHR46558">
    <property type="entry name" value="TRACRIPTIONAL REGULATORY PROTEIN-RELATED-RELATED"/>
    <property type="match status" value="1"/>
</dbReference>
<dbReference type="PANTHER" id="PTHR46558:SF6">
    <property type="entry name" value="TRANSCRIPTIONAL REGULATOR, PBSX FAMILY"/>
    <property type="match status" value="1"/>
</dbReference>
<dbReference type="Pfam" id="PF01381">
    <property type="entry name" value="HTH_3"/>
    <property type="match status" value="1"/>
</dbReference>
<dbReference type="SMART" id="SM00530">
    <property type="entry name" value="HTH_XRE"/>
    <property type="match status" value="1"/>
</dbReference>
<dbReference type="SUPFAM" id="SSF47413">
    <property type="entry name" value="lambda repressor-like DNA-binding domains"/>
    <property type="match status" value="1"/>
</dbReference>
<dbReference type="PROSITE" id="PS50943">
    <property type="entry name" value="HTH_CROC1"/>
    <property type="match status" value="1"/>
</dbReference>
<evidence type="ECO:0000255" key="1">
    <source>
        <dbReference type="PROSITE-ProRule" id="PRU00257"/>
    </source>
</evidence>
<reference key="1">
    <citation type="journal article" date="1997" name="Nature">
        <title>The complete genome sequence of the Gram-positive bacterium Bacillus subtilis.</title>
        <authorList>
            <person name="Kunst F."/>
            <person name="Ogasawara N."/>
            <person name="Moszer I."/>
            <person name="Albertini A.M."/>
            <person name="Alloni G."/>
            <person name="Azevedo V."/>
            <person name="Bertero M.G."/>
            <person name="Bessieres P."/>
            <person name="Bolotin A."/>
            <person name="Borchert S."/>
            <person name="Borriss R."/>
            <person name="Boursier L."/>
            <person name="Brans A."/>
            <person name="Braun M."/>
            <person name="Brignell S.C."/>
            <person name="Bron S."/>
            <person name="Brouillet S."/>
            <person name="Bruschi C.V."/>
            <person name="Caldwell B."/>
            <person name="Capuano V."/>
            <person name="Carter N.M."/>
            <person name="Choi S.-K."/>
            <person name="Codani J.-J."/>
            <person name="Connerton I.F."/>
            <person name="Cummings N.J."/>
            <person name="Daniel R.A."/>
            <person name="Denizot F."/>
            <person name="Devine K.M."/>
            <person name="Duesterhoeft A."/>
            <person name="Ehrlich S.D."/>
            <person name="Emmerson P.T."/>
            <person name="Entian K.-D."/>
            <person name="Errington J."/>
            <person name="Fabret C."/>
            <person name="Ferrari E."/>
            <person name="Foulger D."/>
            <person name="Fritz C."/>
            <person name="Fujita M."/>
            <person name="Fujita Y."/>
            <person name="Fuma S."/>
            <person name="Galizzi A."/>
            <person name="Galleron N."/>
            <person name="Ghim S.-Y."/>
            <person name="Glaser P."/>
            <person name="Goffeau A."/>
            <person name="Golightly E.J."/>
            <person name="Grandi G."/>
            <person name="Guiseppi G."/>
            <person name="Guy B.J."/>
            <person name="Haga K."/>
            <person name="Haiech J."/>
            <person name="Harwood C.R."/>
            <person name="Henaut A."/>
            <person name="Hilbert H."/>
            <person name="Holsappel S."/>
            <person name="Hosono S."/>
            <person name="Hullo M.-F."/>
            <person name="Itaya M."/>
            <person name="Jones L.-M."/>
            <person name="Joris B."/>
            <person name="Karamata D."/>
            <person name="Kasahara Y."/>
            <person name="Klaerr-Blanchard M."/>
            <person name="Klein C."/>
            <person name="Kobayashi Y."/>
            <person name="Koetter P."/>
            <person name="Koningstein G."/>
            <person name="Krogh S."/>
            <person name="Kumano M."/>
            <person name="Kurita K."/>
            <person name="Lapidus A."/>
            <person name="Lardinois S."/>
            <person name="Lauber J."/>
            <person name="Lazarevic V."/>
            <person name="Lee S.-M."/>
            <person name="Levine A."/>
            <person name="Liu H."/>
            <person name="Masuda S."/>
            <person name="Mauel C."/>
            <person name="Medigue C."/>
            <person name="Medina N."/>
            <person name="Mellado R.P."/>
            <person name="Mizuno M."/>
            <person name="Moestl D."/>
            <person name="Nakai S."/>
            <person name="Noback M."/>
            <person name="Noone D."/>
            <person name="O'Reilly M."/>
            <person name="Ogawa K."/>
            <person name="Ogiwara A."/>
            <person name="Oudega B."/>
            <person name="Park S.-H."/>
            <person name="Parro V."/>
            <person name="Pohl T.M."/>
            <person name="Portetelle D."/>
            <person name="Porwollik S."/>
            <person name="Prescott A.M."/>
            <person name="Presecan E."/>
            <person name="Pujic P."/>
            <person name="Purnelle B."/>
            <person name="Rapoport G."/>
            <person name="Rey M."/>
            <person name="Reynolds S."/>
            <person name="Rieger M."/>
            <person name="Rivolta C."/>
            <person name="Rocha E."/>
            <person name="Roche B."/>
            <person name="Rose M."/>
            <person name="Sadaie Y."/>
            <person name="Sato T."/>
            <person name="Scanlan E."/>
            <person name="Schleich S."/>
            <person name="Schroeter R."/>
            <person name="Scoffone F."/>
            <person name="Sekiguchi J."/>
            <person name="Sekowska A."/>
            <person name="Seror S.J."/>
            <person name="Serror P."/>
            <person name="Shin B.-S."/>
            <person name="Soldo B."/>
            <person name="Sorokin A."/>
            <person name="Tacconi E."/>
            <person name="Takagi T."/>
            <person name="Takahashi H."/>
            <person name="Takemaru K."/>
            <person name="Takeuchi M."/>
            <person name="Tamakoshi A."/>
            <person name="Tanaka T."/>
            <person name="Terpstra P."/>
            <person name="Tognoni A."/>
            <person name="Tosato V."/>
            <person name="Uchiyama S."/>
            <person name="Vandenbol M."/>
            <person name="Vannier F."/>
            <person name="Vassarotti A."/>
            <person name="Viari A."/>
            <person name="Wambutt R."/>
            <person name="Wedler E."/>
            <person name="Wedler H."/>
            <person name="Weitzenegger T."/>
            <person name="Winters P."/>
            <person name="Wipat A."/>
            <person name="Yamamoto H."/>
            <person name="Yamane K."/>
            <person name="Yasumoto K."/>
            <person name="Yata K."/>
            <person name="Yoshida K."/>
            <person name="Yoshikawa H.-F."/>
            <person name="Zumstein E."/>
            <person name="Yoshikawa H."/>
            <person name="Danchin A."/>
        </authorList>
    </citation>
    <scope>NUCLEOTIDE SEQUENCE [LARGE SCALE GENOMIC DNA]</scope>
    <source>
        <strain>168</strain>
    </source>
</reference>
<gene>
    <name type="primary">ygzD</name>
    <name type="ordered locus">BSU08899</name>
</gene>
<name>YGZD_BACSU</name>
<organism>
    <name type="scientific">Bacillus subtilis (strain 168)</name>
    <dbReference type="NCBI Taxonomy" id="224308"/>
    <lineage>
        <taxon>Bacteria</taxon>
        <taxon>Bacillati</taxon>
        <taxon>Bacillota</taxon>
        <taxon>Bacilli</taxon>
        <taxon>Bacillales</taxon>
        <taxon>Bacillaceae</taxon>
        <taxon>Bacillus</taxon>
    </lineage>
</organism>
<sequence length="66" mass="7569">MKNKVKELRARFGYSQEKLGETVGVTRQTVAAIEKGDYVPSLLLALKICKAFSMKMEDVFWLEEEN</sequence>
<protein>
    <recommendedName>
        <fullName>Uncharacterized HTH-type transcriptional regulator YgzD</fullName>
    </recommendedName>
</protein>
<accession>C0H3X9</accession>